<reference key="1">
    <citation type="journal article" date="2000" name="Nature">
        <title>The genome sequence of the plant pathogen Xylella fastidiosa.</title>
        <authorList>
            <person name="Simpson A.J.G."/>
            <person name="Reinach F.C."/>
            <person name="Arruda P."/>
            <person name="Abreu F.A."/>
            <person name="Acencio M."/>
            <person name="Alvarenga R."/>
            <person name="Alves L.M.C."/>
            <person name="Araya J.E."/>
            <person name="Baia G.S."/>
            <person name="Baptista C.S."/>
            <person name="Barros M.H."/>
            <person name="Bonaccorsi E.D."/>
            <person name="Bordin S."/>
            <person name="Bove J.M."/>
            <person name="Briones M.R.S."/>
            <person name="Bueno M.R.P."/>
            <person name="Camargo A.A."/>
            <person name="Camargo L.E.A."/>
            <person name="Carraro D.M."/>
            <person name="Carrer H."/>
            <person name="Colauto N.B."/>
            <person name="Colombo C."/>
            <person name="Costa F.F."/>
            <person name="Costa M.C.R."/>
            <person name="Costa-Neto C.M."/>
            <person name="Coutinho L.L."/>
            <person name="Cristofani M."/>
            <person name="Dias-Neto E."/>
            <person name="Docena C."/>
            <person name="El-Dorry H."/>
            <person name="Facincani A.P."/>
            <person name="Ferreira A.J.S."/>
            <person name="Ferreira V.C.A."/>
            <person name="Ferro J.A."/>
            <person name="Fraga J.S."/>
            <person name="Franca S.C."/>
            <person name="Franco M.C."/>
            <person name="Frohme M."/>
            <person name="Furlan L.R."/>
            <person name="Garnier M."/>
            <person name="Goldman G.H."/>
            <person name="Goldman M.H.S."/>
            <person name="Gomes S.L."/>
            <person name="Gruber A."/>
            <person name="Ho P.L."/>
            <person name="Hoheisel J.D."/>
            <person name="Junqueira M.L."/>
            <person name="Kemper E.L."/>
            <person name="Kitajima J.P."/>
            <person name="Krieger J.E."/>
            <person name="Kuramae E.E."/>
            <person name="Laigret F."/>
            <person name="Lambais M.R."/>
            <person name="Leite L.C.C."/>
            <person name="Lemos E.G.M."/>
            <person name="Lemos M.V.F."/>
            <person name="Lopes S.A."/>
            <person name="Lopes C.R."/>
            <person name="Machado J.A."/>
            <person name="Machado M.A."/>
            <person name="Madeira A.M.B.N."/>
            <person name="Madeira H.M.F."/>
            <person name="Marino C.L."/>
            <person name="Marques M.V."/>
            <person name="Martins E.A.L."/>
            <person name="Martins E.M.F."/>
            <person name="Matsukuma A.Y."/>
            <person name="Menck C.F.M."/>
            <person name="Miracca E.C."/>
            <person name="Miyaki C.Y."/>
            <person name="Monteiro-Vitorello C.B."/>
            <person name="Moon D.H."/>
            <person name="Nagai M.A."/>
            <person name="Nascimento A.L.T.O."/>
            <person name="Netto L.E.S."/>
            <person name="Nhani A. Jr."/>
            <person name="Nobrega F.G."/>
            <person name="Nunes L.R."/>
            <person name="Oliveira M.A."/>
            <person name="de Oliveira M.C."/>
            <person name="de Oliveira R.C."/>
            <person name="Palmieri D.A."/>
            <person name="Paris A."/>
            <person name="Peixoto B.R."/>
            <person name="Pereira G.A.G."/>
            <person name="Pereira H.A. Jr."/>
            <person name="Pesquero J.B."/>
            <person name="Quaggio R.B."/>
            <person name="Roberto P.G."/>
            <person name="Rodrigues V."/>
            <person name="de Rosa A.J.M."/>
            <person name="de Rosa V.E. Jr."/>
            <person name="de Sa R.G."/>
            <person name="Santelli R.V."/>
            <person name="Sawasaki H.E."/>
            <person name="da Silva A.C.R."/>
            <person name="da Silva A.M."/>
            <person name="da Silva F.R."/>
            <person name="Silva W.A. Jr."/>
            <person name="da Silveira J.F."/>
            <person name="Silvestri M.L.Z."/>
            <person name="Siqueira W.J."/>
            <person name="de Souza A.A."/>
            <person name="de Souza A.P."/>
            <person name="Terenzi M.F."/>
            <person name="Truffi D."/>
            <person name="Tsai S.M."/>
            <person name="Tsuhako M.H."/>
            <person name="Vallada H."/>
            <person name="Van Sluys M.A."/>
            <person name="Verjovski-Almeida S."/>
            <person name="Vettore A.L."/>
            <person name="Zago M.A."/>
            <person name="Zatz M."/>
            <person name="Meidanis J."/>
            <person name="Setubal J.C."/>
        </authorList>
    </citation>
    <scope>NUCLEOTIDE SEQUENCE [LARGE SCALE GENOMIC DNA]</scope>
    <source>
        <strain>9a5c</strain>
    </source>
</reference>
<keyword id="KW-0067">ATP-binding</keyword>
<keyword id="KW-0319">Glycerol metabolism</keyword>
<keyword id="KW-0418">Kinase</keyword>
<keyword id="KW-0547">Nucleotide-binding</keyword>
<keyword id="KW-0808">Transferase</keyword>
<name>GLPK_XYLFA</name>
<feature type="chain" id="PRO_0000059524" description="Glycerol kinase">
    <location>
        <begin position="1"/>
        <end position="499"/>
    </location>
</feature>
<feature type="binding site" evidence="1">
    <location>
        <position position="13"/>
    </location>
    <ligand>
        <name>ADP</name>
        <dbReference type="ChEBI" id="CHEBI:456216"/>
    </ligand>
</feature>
<feature type="binding site" evidence="1">
    <location>
        <position position="13"/>
    </location>
    <ligand>
        <name>ATP</name>
        <dbReference type="ChEBI" id="CHEBI:30616"/>
    </ligand>
</feature>
<feature type="binding site" evidence="1">
    <location>
        <position position="13"/>
    </location>
    <ligand>
        <name>sn-glycerol 3-phosphate</name>
        <dbReference type="ChEBI" id="CHEBI:57597"/>
    </ligand>
</feature>
<feature type="binding site" evidence="1">
    <location>
        <position position="14"/>
    </location>
    <ligand>
        <name>ATP</name>
        <dbReference type="ChEBI" id="CHEBI:30616"/>
    </ligand>
</feature>
<feature type="binding site" evidence="1">
    <location>
        <position position="15"/>
    </location>
    <ligand>
        <name>ATP</name>
        <dbReference type="ChEBI" id="CHEBI:30616"/>
    </ligand>
</feature>
<feature type="binding site" evidence="1">
    <location>
        <position position="17"/>
    </location>
    <ligand>
        <name>ADP</name>
        <dbReference type="ChEBI" id="CHEBI:456216"/>
    </ligand>
</feature>
<feature type="binding site" evidence="1">
    <location>
        <position position="83"/>
    </location>
    <ligand>
        <name>glycerol</name>
        <dbReference type="ChEBI" id="CHEBI:17754"/>
    </ligand>
</feature>
<feature type="binding site" evidence="1">
    <location>
        <position position="83"/>
    </location>
    <ligand>
        <name>sn-glycerol 3-phosphate</name>
        <dbReference type="ChEBI" id="CHEBI:57597"/>
    </ligand>
</feature>
<feature type="binding site" evidence="1">
    <location>
        <position position="84"/>
    </location>
    <ligand>
        <name>glycerol</name>
        <dbReference type="ChEBI" id="CHEBI:17754"/>
    </ligand>
</feature>
<feature type="binding site" evidence="1">
    <location>
        <position position="84"/>
    </location>
    <ligand>
        <name>sn-glycerol 3-phosphate</name>
        <dbReference type="ChEBI" id="CHEBI:57597"/>
    </ligand>
</feature>
<feature type="binding site" evidence="1">
    <location>
        <position position="135"/>
    </location>
    <ligand>
        <name>glycerol</name>
        <dbReference type="ChEBI" id="CHEBI:17754"/>
    </ligand>
</feature>
<feature type="binding site" evidence="1">
    <location>
        <position position="135"/>
    </location>
    <ligand>
        <name>sn-glycerol 3-phosphate</name>
        <dbReference type="ChEBI" id="CHEBI:57597"/>
    </ligand>
</feature>
<feature type="binding site" evidence="1">
    <location>
        <position position="245"/>
    </location>
    <ligand>
        <name>glycerol</name>
        <dbReference type="ChEBI" id="CHEBI:17754"/>
    </ligand>
</feature>
<feature type="binding site" evidence="1">
    <location>
        <position position="245"/>
    </location>
    <ligand>
        <name>sn-glycerol 3-phosphate</name>
        <dbReference type="ChEBI" id="CHEBI:57597"/>
    </ligand>
</feature>
<feature type="binding site" evidence="1">
    <location>
        <position position="246"/>
    </location>
    <ligand>
        <name>glycerol</name>
        <dbReference type="ChEBI" id="CHEBI:17754"/>
    </ligand>
</feature>
<feature type="binding site" evidence="1">
    <location>
        <position position="267"/>
    </location>
    <ligand>
        <name>ADP</name>
        <dbReference type="ChEBI" id="CHEBI:456216"/>
    </ligand>
</feature>
<feature type="binding site" evidence="1">
    <location>
        <position position="267"/>
    </location>
    <ligand>
        <name>ATP</name>
        <dbReference type="ChEBI" id="CHEBI:30616"/>
    </ligand>
</feature>
<feature type="binding site" evidence="1">
    <location>
        <position position="310"/>
    </location>
    <ligand>
        <name>ADP</name>
        <dbReference type="ChEBI" id="CHEBI:456216"/>
    </ligand>
</feature>
<feature type="binding site" evidence="1">
    <location>
        <position position="310"/>
    </location>
    <ligand>
        <name>ATP</name>
        <dbReference type="ChEBI" id="CHEBI:30616"/>
    </ligand>
</feature>
<feature type="binding site" evidence="1">
    <location>
        <position position="314"/>
    </location>
    <ligand>
        <name>ATP</name>
        <dbReference type="ChEBI" id="CHEBI:30616"/>
    </ligand>
</feature>
<feature type="binding site" evidence="1">
    <location>
        <position position="411"/>
    </location>
    <ligand>
        <name>ADP</name>
        <dbReference type="ChEBI" id="CHEBI:456216"/>
    </ligand>
</feature>
<feature type="binding site" evidence="1">
    <location>
        <position position="411"/>
    </location>
    <ligand>
        <name>ATP</name>
        <dbReference type="ChEBI" id="CHEBI:30616"/>
    </ligand>
</feature>
<feature type="binding site" evidence="1">
    <location>
        <position position="415"/>
    </location>
    <ligand>
        <name>ADP</name>
        <dbReference type="ChEBI" id="CHEBI:456216"/>
    </ligand>
</feature>
<protein>
    <recommendedName>
        <fullName evidence="1">Glycerol kinase</fullName>
        <ecNumber evidence="1">2.7.1.30</ecNumber>
    </recommendedName>
    <alternativeName>
        <fullName evidence="1">ATP:glycerol 3-phosphotransferase</fullName>
    </alternativeName>
    <alternativeName>
        <fullName evidence="1">Glycerokinase</fullName>
        <shortName evidence="1">GK</shortName>
    </alternativeName>
</protein>
<sequence length="499" mass="55112">MKKKYILAIDQGTTSSRAILFDQKGHIAGMAQREFTQIFPQPGWVEHNPRDIMTSVYTTITELLNNTQIDVRAIAGIGITNQRETTVIWDRQTGQPIYNAIVWQSRQTKDICDQLTTAGYQDLVHAKTGLLIDAYFSGTKVKWILDHVENAHTQATRGELAFGTIDTWIIWNLTGGQVHVTDYSNASRTLLYDIHALRWDPDLLTMLDIPAAILPDVRSSSDIYGLTQTPYFHGEQIPIAGIAGDQQAALFGQACFEPGMAKNTYGTGCFMLMHTGKKAVESKNGLLTTIAWGLNGEIEYALEGSIFVAGSVVQWLRDGLRMFGKASDSQAYADRVSDNGGVYVVPAFVGLGAPYWRSDVRGAVFGLTRSTTKEHFIRAALESMAYQTRDVLSAMQADAGMELKELRTDGAAITNDFMAQFQSDILAVPVLRSEIAETTALGAAYLAGLATGFWSSREEITQHWAINLCFKPQMDKQQREHLYAGWKQAVAATLGFRVA</sequence>
<gene>
    <name evidence="1" type="primary">glpK</name>
    <name type="ordered locus">XF_2268</name>
</gene>
<accession>Q9PB76</accession>
<dbReference type="EC" id="2.7.1.30" evidence="1"/>
<dbReference type="EMBL" id="AE003849">
    <property type="protein sequence ID" value="AAF85067.1"/>
    <property type="status" value="ALT_INIT"/>
    <property type="molecule type" value="Genomic_DNA"/>
</dbReference>
<dbReference type="PIR" id="B82578">
    <property type="entry name" value="B82578"/>
</dbReference>
<dbReference type="RefSeq" id="WP_031337660.1">
    <property type="nucleotide sequence ID" value="NC_002488.3"/>
</dbReference>
<dbReference type="SMR" id="Q9PB76"/>
<dbReference type="STRING" id="160492.XF_2268"/>
<dbReference type="KEGG" id="xfa:XF_2268"/>
<dbReference type="PATRIC" id="fig|160492.11.peg.2416"/>
<dbReference type="eggNOG" id="COG0554">
    <property type="taxonomic scope" value="Bacteria"/>
</dbReference>
<dbReference type="HOGENOM" id="CLU_009281_2_3_6"/>
<dbReference type="UniPathway" id="UPA00618">
    <property type="reaction ID" value="UER00672"/>
</dbReference>
<dbReference type="Proteomes" id="UP000000812">
    <property type="component" value="Chromosome"/>
</dbReference>
<dbReference type="GO" id="GO:0005829">
    <property type="term" value="C:cytosol"/>
    <property type="evidence" value="ECO:0007669"/>
    <property type="project" value="TreeGrafter"/>
</dbReference>
<dbReference type="GO" id="GO:0005524">
    <property type="term" value="F:ATP binding"/>
    <property type="evidence" value="ECO:0007669"/>
    <property type="project" value="UniProtKB-UniRule"/>
</dbReference>
<dbReference type="GO" id="GO:0004370">
    <property type="term" value="F:glycerol kinase activity"/>
    <property type="evidence" value="ECO:0000250"/>
    <property type="project" value="UniProtKB"/>
</dbReference>
<dbReference type="GO" id="GO:0019563">
    <property type="term" value="P:glycerol catabolic process"/>
    <property type="evidence" value="ECO:0007669"/>
    <property type="project" value="UniProtKB-UniRule"/>
</dbReference>
<dbReference type="GO" id="GO:0006071">
    <property type="term" value="P:glycerol metabolic process"/>
    <property type="evidence" value="ECO:0000250"/>
    <property type="project" value="UniProtKB"/>
</dbReference>
<dbReference type="GO" id="GO:0006072">
    <property type="term" value="P:glycerol-3-phosphate metabolic process"/>
    <property type="evidence" value="ECO:0007669"/>
    <property type="project" value="InterPro"/>
</dbReference>
<dbReference type="CDD" id="cd07786">
    <property type="entry name" value="FGGY_EcGK_like"/>
    <property type="match status" value="1"/>
</dbReference>
<dbReference type="FunFam" id="3.30.420.40:FF:000007">
    <property type="entry name" value="Glycerol kinase"/>
    <property type="match status" value="1"/>
</dbReference>
<dbReference type="FunFam" id="3.30.420.40:FF:000008">
    <property type="entry name" value="Glycerol kinase"/>
    <property type="match status" value="1"/>
</dbReference>
<dbReference type="Gene3D" id="3.30.420.40">
    <property type="match status" value="2"/>
</dbReference>
<dbReference type="HAMAP" id="MF_00186">
    <property type="entry name" value="Glycerol_kin"/>
    <property type="match status" value="1"/>
</dbReference>
<dbReference type="InterPro" id="IPR043129">
    <property type="entry name" value="ATPase_NBD"/>
</dbReference>
<dbReference type="InterPro" id="IPR000577">
    <property type="entry name" value="Carb_kinase_FGGY"/>
</dbReference>
<dbReference type="InterPro" id="IPR018483">
    <property type="entry name" value="Carb_kinase_FGGY_CS"/>
</dbReference>
<dbReference type="InterPro" id="IPR018485">
    <property type="entry name" value="FGGY_C"/>
</dbReference>
<dbReference type="InterPro" id="IPR018484">
    <property type="entry name" value="FGGY_N"/>
</dbReference>
<dbReference type="InterPro" id="IPR005999">
    <property type="entry name" value="Glycerol_kin"/>
</dbReference>
<dbReference type="NCBIfam" id="TIGR01311">
    <property type="entry name" value="glycerol_kin"/>
    <property type="match status" value="1"/>
</dbReference>
<dbReference type="NCBIfam" id="NF000756">
    <property type="entry name" value="PRK00047.1"/>
    <property type="match status" value="1"/>
</dbReference>
<dbReference type="PANTHER" id="PTHR10196:SF69">
    <property type="entry name" value="GLYCEROL KINASE"/>
    <property type="match status" value="1"/>
</dbReference>
<dbReference type="PANTHER" id="PTHR10196">
    <property type="entry name" value="SUGAR KINASE"/>
    <property type="match status" value="1"/>
</dbReference>
<dbReference type="Pfam" id="PF02782">
    <property type="entry name" value="FGGY_C"/>
    <property type="match status" value="1"/>
</dbReference>
<dbReference type="Pfam" id="PF00370">
    <property type="entry name" value="FGGY_N"/>
    <property type="match status" value="1"/>
</dbReference>
<dbReference type="PIRSF" id="PIRSF000538">
    <property type="entry name" value="GlpK"/>
    <property type="match status" value="1"/>
</dbReference>
<dbReference type="SUPFAM" id="SSF53067">
    <property type="entry name" value="Actin-like ATPase domain"/>
    <property type="match status" value="2"/>
</dbReference>
<dbReference type="PROSITE" id="PS00933">
    <property type="entry name" value="FGGY_KINASES_1"/>
    <property type="match status" value="1"/>
</dbReference>
<dbReference type="PROSITE" id="PS00445">
    <property type="entry name" value="FGGY_KINASES_2"/>
    <property type="match status" value="1"/>
</dbReference>
<proteinExistence type="inferred from homology"/>
<evidence type="ECO:0000255" key="1">
    <source>
        <dbReference type="HAMAP-Rule" id="MF_00186"/>
    </source>
</evidence>
<evidence type="ECO:0000305" key="2"/>
<comment type="function">
    <text evidence="1">Key enzyme in the regulation of glycerol uptake and metabolism. Catalyzes the phosphorylation of glycerol to yield sn-glycerol 3-phosphate.</text>
</comment>
<comment type="catalytic activity">
    <reaction evidence="1">
        <text>glycerol + ATP = sn-glycerol 3-phosphate + ADP + H(+)</text>
        <dbReference type="Rhea" id="RHEA:21644"/>
        <dbReference type="ChEBI" id="CHEBI:15378"/>
        <dbReference type="ChEBI" id="CHEBI:17754"/>
        <dbReference type="ChEBI" id="CHEBI:30616"/>
        <dbReference type="ChEBI" id="CHEBI:57597"/>
        <dbReference type="ChEBI" id="CHEBI:456216"/>
        <dbReference type="EC" id="2.7.1.30"/>
    </reaction>
</comment>
<comment type="activity regulation">
    <text evidence="1">Inhibited by fructose 1,6-bisphosphate (FBP).</text>
</comment>
<comment type="pathway">
    <text evidence="1">Polyol metabolism; glycerol degradation via glycerol kinase pathway; sn-glycerol 3-phosphate from glycerol: step 1/1.</text>
</comment>
<comment type="similarity">
    <text evidence="1">Belongs to the FGGY kinase family.</text>
</comment>
<comment type="sequence caution" evidence="2">
    <conflict type="erroneous initiation">
        <sequence resource="EMBL-CDS" id="AAF85067"/>
    </conflict>
    <text>Extended N-terminus.</text>
</comment>
<organism>
    <name type="scientific">Xylella fastidiosa (strain 9a5c)</name>
    <dbReference type="NCBI Taxonomy" id="160492"/>
    <lineage>
        <taxon>Bacteria</taxon>
        <taxon>Pseudomonadati</taxon>
        <taxon>Pseudomonadota</taxon>
        <taxon>Gammaproteobacteria</taxon>
        <taxon>Lysobacterales</taxon>
        <taxon>Lysobacteraceae</taxon>
        <taxon>Xylella</taxon>
    </lineage>
</organism>